<organism>
    <name type="scientific">Drosophila simulans</name>
    <name type="common">Fruit fly</name>
    <dbReference type="NCBI Taxonomy" id="7240"/>
    <lineage>
        <taxon>Eukaryota</taxon>
        <taxon>Metazoa</taxon>
        <taxon>Ecdysozoa</taxon>
        <taxon>Arthropoda</taxon>
        <taxon>Hexapoda</taxon>
        <taxon>Insecta</taxon>
        <taxon>Pterygota</taxon>
        <taxon>Neoptera</taxon>
        <taxon>Endopterygota</taxon>
        <taxon>Diptera</taxon>
        <taxon>Brachycera</taxon>
        <taxon>Muscomorpha</taxon>
        <taxon>Ephydroidea</taxon>
        <taxon>Drosophilidae</taxon>
        <taxon>Drosophila</taxon>
        <taxon>Sophophora</taxon>
    </lineage>
</organism>
<sequence length="498" mass="52725">MTLDSYNIFNDEYLFNMPLSPLPKVLGNFETGQSVLTLTTPTLTPTTTRNIEDTLGHLLSDTQTDRVAGCAGFAVPKVLPNAMGAIDALGMGIPTCVSSLPLQQTYDASLGQGSESEDSNASYNDTQMNEEQDTTDTSSAHTDSTSYQAGHIMAGSVNGGGVNNFTNVLAAVSSSRGSASVGSSNANTSNTPARRGGGRRPNRSTNMTPEEEQKRAVRRERNKQAAARCRKRRVDQTNELTEEVEQLEKRRDSMRKEFEALTNSKKQLEYLLATHRSTCQKIRSDMLSVATCNGLIAPAGLLSAGSSGSGASSHHNHNSNDSSNGTITGMDATLNSTGRSNSPLDLKPAANIDSLLLHIKDEPLDGAIDSGSSLDRFPVTSNGSSINNINSIGNNMNSPTLNALNKVPKERPNTLAFQRPLGQMHLSMANNKAGGPTQIQGVPIQTPSTGTFNLVSLMDGGTGLTPVSGPLVPNSSSTNKHPLELPTPTAEPSKLVSL</sequence>
<reference evidence="6" key="1">
    <citation type="journal article" date="2007" name="Nature">
        <title>Evolution of genes and genomes on the Drosophila phylogeny.</title>
        <authorList>
            <consortium name="Drosophila 12 genomes consortium"/>
        </authorList>
    </citation>
    <scope>NUCLEOTIDE SEQUENCE [LARGE SCALE GENOMIC DNA]</scope>
</reference>
<feature type="chain" id="PRO_0000377390" description="Transcription factor kayak">
    <location>
        <begin position="1"/>
        <end position="498"/>
    </location>
</feature>
<feature type="domain" description="bZIP" evidence="4">
    <location>
        <begin position="212"/>
        <end position="275"/>
    </location>
</feature>
<feature type="region of interest" description="Disordered" evidence="5">
    <location>
        <begin position="108"/>
        <end position="144"/>
    </location>
</feature>
<feature type="region of interest" description="Disordered" evidence="5">
    <location>
        <begin position="177"/>
        <end position="234"/>
    </location>
</feature>
<feature type="region of interest" description="Basic motif" evidence="4">
    <location>
        <begin position="214"/>
        <end position="233"/>
    </location>
</feature>
<feature type="region of interest" description="Leucine-zipper" evidence="4">
    <location>
        <begin position="240"/>
        <end position="247"/>
    </location>
</feature>
<feature type="region of interest" description="Disordered" evidence="5">
    <location>
        <begin position="304"/>
        <end position="345"/>
    </location>
</feature>
<feature type="region of interest" description="Disordered" evidence="5">
    <location>
        <begin position="465"/>
        <end position="498"/>
    </location>
</feature>
<feature type="compositionally biased region" description="Polar residues" evidence="5">
    <location>
        <begin position="108"/>
        <end position="127"/>
    </location>
</feature>
<feature type="compositionally biased region" description="Low complexity" evidence="5">
    <location>
        <begin position="135"/>
        <end position="144"/>
    </location>
</feature>
<feature type="compositionally biased region" description="Low complexity" evidence="5">
    <location>
        <begin position="177"/>
        <end position="191"/>
    </location>
</feature>
<feature type="compositionally biased region" description="Low complexity" evidence="5">
    <location>
        <begin position="304"/>
        <end position="325"/>
    </location>
</feature>
<feature type="compositionally biased region" description="Polar residues" evidence="5">
    <location>
        <begin position="333"/>
        <end position="343"/>
    </location>
</feature>
<feature type="modified residue" description="Phosphoserine" evidence="2">
    <location>
        <position position="342"/>
    </location>
</feature>
<comment type="function">
    <text evidence="2">Developmentally regulated transcription factor AP-1 binds and recognizes the enhancer DNA sequence: 5'-TGA[CG]TCA-3'. May play a role in the function or determination of a particular subset of cells in the developing embryo. It is able to carry out its function either independently of or in conjunction with Jra (By similarity).</text>
</comment>
<comment type="subunit">
    <text evidence="1">Homodimer. Heterodimer with Jra. The kay-Jra heterodimer binds more stably to the AP-1 site than either of the two proteins alone (By similarity).</text>
</comment>
<comment type="subcellular location">
    <subcellularLocation>
        <location evidence="2 4">Nucleus</location>
    </subcellularLocation>
</comment>
<comment type="similarity">
    <text evidence="3">Belongs to the bZIP family. Fos subfamily.</text>
</comment>
<gene>
    <name evidence="2" type="primary">kay</name>
    <name type="ORF">GD21465</name>
</gene>
<name>FOSL_DROSI</name>
<accession>B4R090</accession>
<proteinExistence type="inferred from homology"/>
<protein>
    <recommendedName>
        <fullName evidence="2">Transcription factor kayak</fullName>
    </recommendedName>
</protein>
<keyword id="KW-0010">Activator</keyword>
<keyword id="KW-0238">DNA-binding</keyword>
<keyword id="KW-0539">Nucleus</keyword>
<keyword id="KW-0597">Phosphoprotein</keyword>
<keyword id="KW-1185">Reference proteome</keyword>
<keyword id="KW-0804">Transcription</keyword>
<keyword id="KW-0805">Transcription regulation</keyword>
<evidence type="ECO:0000250" key="1"/>
<evidence type="ECO:0000250" key="2">
    <source>
        <dbReference type="UniProtKB" id="P21525"/>
    </source>
</evidence>
<evidence type="ECO:0000255" key="3"/>
<evidence type="ECO:0000255" key="4">
    <source>
        <dbReference type="PROSITE-ProRule" id="PRU00978"/>
    </source>
</evidence>
<evidence type="ECO:0000256" key="5">
    <source>
        <dbReference type="SAM" id="MobiDB-lite"/>
    </source>
</evidence>
<evidence type="ECO:0000312" key="6">
    <source>
        <dbReference type="EMBL" id="EDX14896.1"/>
    </source>
</evidence>
<dbReference type="EMBL" id="CM000364">
    <property type="protein sequence ID" value="EDX14896.1"/>
    <property type="molecule type" value="Genomic_DNA"/>
</dbReference>
<dbReference type="SMR" id="B4R090"/>
<dbReference type="STRING" id="7240.B4R090"/>
<dbReference type="HOGENOM" id="CLU_020183_0_0_1"/>
<dbReference type="OMA" id="HQSLHFA"/>
<dbReference type="OrthoDB" id="5866312at2759"/>
<dbReference type="PhylomeDB" id="B4R090"/>
<dbReference type="ChiTaRS" id="kay">
    <property type="organism name" value="fly"/>
</dbReference>
<dbReference type="Proteomes" id="UP000000304">
    <property type="component" value="Chromosome 3R"/>
</dbReference>
<dbReference type="GO" id="GO:0005634">
    <property type="term" value="C:nucleus"/>
    <property type="evidence" value="ECO:0000250"/>
    <property type="project" value="UniProtKB"/>
</dbReference>
<dbReference type="GO" id="GO:0003677">
    <property type="term" value="F:DNA binding"/>
    <property type="evidence" value="ECO:0000250"/>
    <property type="project" value="UniProtKB"/>
</dbReference>
<dbReference type="GO" id="GO:0000981">
    <property type="term" value="F:DNA-binding transcription factor activity, RNA polymerase II-specific"/>
    <property type="evidence" value="ECO:0007669"/>
    <property type="project" value="TreeGrafter"/>
</dbReference>
<dbReference type="GO" id="GO:0000978">
    <property type="term" value="F:RNA polymerase II cis-regulatory region sequence-specific DNA binding"/>
    <property type="evidence" value="ECO:0007669"/>
    <property type="project" value="TreeGrafter"/>
</dbReference>
<dbReference type="GO" id="GO:0009792">
    <property type="term" value="P:embryo development ending in birth or egg hatching"/>
    <property type="evidence" value="ECO:0000250"/>
    <property type="project" value="UniProtKB"/>
</dbReference>
<dbReference type="CDD" id="cd14721">
    <property type="entry name" value="bZIP_Fos"/>
    <property type="match status" value="1"/>
</dbReference>
<dbReference type="Gene3D" id="1.20.5.170">
    <property type="match status" value="1"/>
</dbReference>
<dbReference type="InterPro" id="IPR000837">
    <property type="entry name" value="AP-1"/>
</dbReference>
<dbReference type="InterPro" id="IPR004827">
    <property type="entry name" value="bZIP"/>
</dbReference>
<dbReference type="InterPro" id="IPR046347">
    <property type="entry name" value="bZIP_sf"/>
</dbReference>
<dbReference type="PANTHER" id="PTHR23351:SF24">
    <property type="entry name" value="ACTIVATING TRANSCRIPTION FACTOR 3-RELATED"/>
    <property type="match status" value="1"/>
</dbReference>
<dbReference type="PANTHER" id="PTHR23351">
    <property type="entry name" value="FOS TRANSCRIPTION FACTOR-RELATED"/>
    <property type="match status" value="1"/>
</dbReference>
<dbReference type="Pfam" id="PF00170">
    <property type="entry name" value="bZIP_1"/>
    <property type="match status" value="1"/>
</dbReference>
<dbReference type="PRINTS" id="PR00042">
    <property type="entry name" value="LEUZIPPRFOS"/>
</dbReference>
<dbReference type="SMART" id="SM00338">
    <property type="entry name" value="BRLZ"/>
    <property type="match status" value="1"/>
</dbReference>
<dbReference type="SUPFAM" id="SSF57959">
    <property type="entry name" value="Leucine zipper domain"/>
    <property type="match status" value="1"/>
</dbReference>
<dbReference type="PROSITE" id="PS50217">
    <property type="entry name" value="BZIP"/>
    <property type="match status" value="1"/>
</dbReference>
<dbReference type="PROSITE" id="PS00036">
    <property type="entry name" value="BZIP_BASIC"/>
    <property type="match status" value="1"/>
</dbReference>